<evidence type="ECO:0000255" key="1">
    <source>
        <dbReference type="HAMAP-Rule" id="MF_03056"/>
    </source>
</evidence>
<evidence type="ECO:0000256" key="2">
    <source>
        <dbReference type="SAM" id="MobiDB-lite"/>
    </source>
</evidence>
<accession>A7F9K1</accession>
<sequence length="517" mass="56911">MSILRSPYQCLKQCGNYLVAARGSSIDTFDIKNGSYLSTWKSPVPESMSRSKTTEEETQTKNEDQNSETATPEFILESSAPPAKRRKLSITKESGENTGVVQQSKKKTKNSSPKILEPSPITALTITRDLQHVIAVTGEDKTIRVLAWEDTVEKGLRQISDRTMPKRPCALAITDDCNTIISADKFGDVYSLPLIPSPLVPSATENASVQKQAPKMFQPSASALTVHSARNLKALEAQKKQSNKVSEKTGPDFEHKLLLGHVSMLTDILVATLSGRQYILTADRDEHIRISRGIPQAHIIENFCLGHIEYVSRLCIPPTRPEILISGGGDDDLYTWNWLNGSLLSKTNLKSQVEALDTEKQSAQEAESKKIAVTGVYHARDEVSNQDIIIATSEGVPAAFIYFLTASNQLTHTQTLALPGNALSCTFSNPDLSSPFSLIISINNIHEPSSITTLKDANSSVANPLQFFKYENEKFVSVQQDGFAPQDSEGILDDQQKNNLCGLLYNVGNLRKMEDEE</sequence>
<proteinExistence type="inferred from homology"/>
<feature type="chain" id="PRO_0000370526" description="tRNA (guanine-N(7)-)-methyltransferase non-catalytic subunit trm82">
    <location>
        <begin position="1"/>
        <end position="517"/>
    </location>
</feature>
<feature type="repeat" description="WD 1">
    <location>
        <begin position="116"/>
        <end position="158"/>
    </location>
</feature>
<feature type="repeat" description="WD 2">
    <location>
        <begin position="260"/>
        <end position="301"/>
    </location>
</feature>
<feature type="repeat" description="WD 3">
    <location>
        <begin position="306"/>
        <end position="346"/>
    </location>
</feature>
<feature type="region of interest" description="Disordered" evidence="2">
    <location>
        <begin position="40"/>
        <end position="117"/>
    </location>
</feature>
<feature type="compositionally biased region" description="Basic and acidic residues" evidence="2">
    <location>
        <begin position="52"/>
        <end position="64"/>
    </location>
</feature>
<name>TRM82_SCLS1</name>
<protein>
    <recommendedName>
        <fullName evidence="1">tRNA (guanine-N(7)-)-methyltransferase non-catalytic subunit trm82</fullName>
    </recommendedName>
    <alternativeName>
        <fullName evidence="1">Transfer RNA methyltransferase 82</fullName>
    </alternativeName>
</protein>
<organism>
    <name type="scientific">Sclerotinia sclerotiorum (strain ATCC 18683 / 1980 / Ss-1)</name>
    <name type="common">White mold</name>
    <name type="synonym">Whetzelinia sclerotiorum</name>
    <dbReference type="NCBI Taxonomy" id="665079"/>
    <lineage>
        <taxon>Eukaryota</taxon>
        <taxon>Fungi</taxon>
        <taxon>Dikarya</taxon>
        <taxon>Ascomycota</taxon>
        <taxon>Pezizomycotina</taxon>
        <taxon>Leotiomycetes</taxon>
        <taxon>Helotiales</taxon>
        <taxon>Sclerotiniaceae</taxon>
        <taxon>Sclerotinia</taxon>
    </lineage>
</organism>
<reference key="1">
    <citation type="journal article" date="2011" name="PLoS Genet.">
        <title>Genomic analysis of the necrotrophic fungal pathogens Sclerotinia sclerotiorum and Botrytis cinerea.</title>
        <authorList>
            <person name="Amselem J."/>
            <person name="Cuomo C.A."/>
            <person name="van Kan J.A.L."/>
            <person name="Viaud M."/>
            <person name="Benito E.P."/>
            <person name="Couloux A."/>
            <person name="Coutinho P.M."/>
            <person name="de Vries R.P."/>
            <person name="Dyer P.S."/>
            <person name="Fillinger S."/>
            <person name="Fournier E."/>
            <person name="Gout L."/>
            <person name="Hahn M."/>
            <person name="Kohn L."/>
            <person name="Lapalu N."/>
            <person name="Plummer K.M."/>
            <person name="Pradier J.-M."/>
            <person name="Quevillon E."/>
            <person name="Sharon A."/>
            <person name="Simon A."/>
            <person name="ten Have A."/>
            <person name="Tudzynski B."/>
            <person name="Tudzynski P."/>
            <person name="Wincker P."/>
            <person name="Andrew M."/>
            <person name="Anthouard V."/>
            <person name="Beever R.E."/>
            <person name="Beffa R."/>
            <person name="Benoit I."/>
            <person name="Bouzid O."/>
            <person name="Brault B."/>
            <person name="Chen Z."/>
            <person name="Choquer M."/>
            <person name="Collemare J."/>
            <person name="Cotton P."/>
            <person name="Danchin E.G."/>
            <person name="Da Silva C."/>
            <person name="Gautier A."/>
            <person name="Giraud C."/>
            <person name="Giraud T."/>
            <person name="Gonzalez C."/>
            <person name="Grossetete S."/>
            <person name="Gueldener U."/>
            <person name="Henrissat B."/>
            <person name="Howlett B.J."/>
            <person name="Kodira C."/>
            <person name="Kretschmer M."/>
            <person name="Lappartient A."/>
            <person name="Leroch M."/>
            <person name="Levis C."/>
            <person name="Mauceli E."/>
            <person name="Neuveglise C."/>
            <person name="Oeser B."/>
            <person name="Pearson M."/>
            <person name="Poulain J."/>
            <person name="Poussereau N."/>
            <person name="Quesneville H."/>
            <person name="Rascle C."/>
            <person name="Schumacher J."/>
            <person name="Segurens B."/>
            <person name="Sexton A."/>
            <person name="Silva E."/>
            <person name="Sirven C."/>
            <person name="Soanes D.M."/>
            <person name="Talbot N.J."/>
            <person name="Templeton M."/>
            <person name="Yandava C."/>
            <person name="Yarden O."/>
            <person name="Zeng Q."/>
            <person name="Rollins J.A."/>
            <person name="Lebrun M.-H."/>
            <person name="Dickman M."/>
        </authorList>
    </citation>
    <scope>NUCLEOTIDE SEQUENCE [LARGE SCALE GENOMIC DNA]</scope>
    <source>
        <strain>ATCC 18683 / 1980 / Ss-1</strain>
    </source>
</reference>
<dbReference type="EMBL" id="CH476651">
    <property type="protein sequence ID" value="EDO00412.1"/>
    <property type="molecule type" value="Genomic_DNA"/>
</dbReference>
<dbReference type="RefSeq" id="XP_001584827.1">
    <property type="nucleotide sequence ID" value="XM_001584777.1"/>
</dbReference>
<dbReference type="SMR" id="A7F9K1"/>
<dbReference type="FunCoup" id="A7F9K1">
    <property type="interactions" value="254"/>
</dbReference>
<dbReference type="STRING" id="665079.A7F9K1"/>
<dbReference type="EnsemblFungi" id="EDO00412">
    <property type="protein sequence ID" value="EDO00412"/>
    <property type="gene ID" value="SS1G_14282"/>
</dbReference>
<dbReference type="GeneID" id="5480859"/>
<dbReference type="KEGG" id="ssl:SS1G_14282"/>
<dbReference type="VEuPathDB" id="FungiDB:sscle_04g039750"/>
<dbReference type="eggNOG" id="KOG3914">
    <property type="taxonomic scope" value="Eukaryota"/>
</dbReference>
<dbReference type="HOGENOM" id="CLU_022082_0_0_1"/>
<dbReference type="InParanoid" id="A7F9K1"/>
<dbReference type="OMA" id="SERCMPK"/>
<dbReference type="OrthoDB" id="339900at2759"/>
<dbReference type="UniPathway" id="UPA00989"/>
<dbReference type="Proteomes" id="UP000001312">
    <property type="component" value="Unassembled WGS sequence"/>
</dbReference>
<dbReference type="GO" id="GO:0005829">
    <property type="term" value="C:cytosol"/>
    <property type="evidence" value="ECO:0000318"/>
    <property type="project" value="GO_Central"/>
</dbReference>
<dbReference type="GO" id="GO:0005634">
    <property type="term" value="C:nucleus"/>
    <property type="evidence" value="ECO:0000318"/>
    <property type="project" value="GO_Central"/>
</dbReference>
<dbReference type="GO" id="GO:0043527">
    <property type="term" value="C:tRNA methyltransferase complex"/>
    <property type="evidence" value="ECO:0000318"/>
    <property type="project" value="GO_Central"/>
</dbReference>
<dbReference type="GO" id="GO:0106004">
    <property type="term" value="P:tRNA (guanine-N7)-methylation"/>
    <property type="evidence" value="ECO:0007669"/>
    <property type="project" value="UniProtKB-UniRule"/>
</dbReference>
<dbReference type="GO" id="GO:0006400">
    <property type="term" value="P:tRNA modification"/>
    <property type="evidence" value="ECO:0000318"/>
    <property type="project" value="GO_Central"/>
</dbReference>
<dbReference type="Gene3D" id="2.130.10.10">
    <property type="entry name" value="YVTN repeat-like/Quinoprotein amine dehydrogenase"/>
    <property type="match status" value="1"/>
</dbReference>
<dbReference type="HAMAP" id="MF_03056">
    <property type="entry name" value="TRM82"/>
    <property type="match status" value="1"/>
</dbReference>
<dbReference type="InterPro" id="IPR028884">
    <property type="entry name" value="Trm82"/>
</dbReference>
<dbReference type="InterPro" id="IPR015943">
    <property type="entry name" value="WD40/YVTN_repeat-like_dom_sf"/>
</dbReference>
<dbReference type="InterPro" id="IPR036322">
    <property type="entry name" value="WD40_repeat_dom_sf"/>
</dbReference>
<dbReference type="PANTHER" id="PTHR16288:SF0">
    <property type="entry name" value="TRNA (GUANINE-N(7)-)-METHYLTRANSFERASE NON-CATALYTIC SUBUNIT WDR4"/>
    <property type="match status" value="1"/>
</dbReference>
<dbReference type="PANTHER" id="PTHR16288">
    <property type="entry name" value="WD40 REPEAT PROTEIN 4"/>
    <property type="match status" value="1"/>
</dbReference>
<dbReference type="SUPFAM" id="SSF50978">
    <property type="entry name" value="WD40 repeat-like"/>
    <property type="match status" value="1"/>
</dbReference>
<keyword id="KW-0539">Nucleus</keyword>
<keyword id="KW-1185">Reference proteome</keyword>
<keyword id="KW-0677">Repeat</keyword>
<keyword id="KW-0819">tRNA processing</keyword>
<keyword id="KW-0853">WD repeat</keyword>
<comment type="function">
    <text evidence="1">Required for the formation of N(7)-methylguanine at position 46 (m7G46) in tRNA. In the complex, it is required to stabilize and induce conformational changes of the catalytic subunit.</text>
</comment>
<comment type="pathway">
    <text evidence="1">tRNA modification; N(7)-methylguanine-tRNA biosynthesis.</text>
</comment>
<comment type="subunit">
    <text evidence="1">Forms a heterodimer with the catalytic subunit trm8.</text>
</comment>
<comment type="subcellular location">
    <subcellularLocation>
        <location evidence="1">Nucleus</location>
    </subcellularLocation>
</comment>
<comment type="similarity">
    <text evidence="1">Belongs to the WD repeat TRM82 family.</text>
</comment>
<gene>
    <name type="primary">trm82</name>
    <name type="ORF">SS1G_14282</name>
</gene>